<proteinExistence type="inferred from homology"/>
<gene>
    <name evidence="1" type="primary">rpsF</name>
    <name type="ordered locus">RHECIAT_CH0001508</name>
</gene>
<reference key="1">
    <citation type="journal article" date="2010" name="Appl. Environ. Microbiol.">
        <title>Conserved symbiotic plasmid DNA sequences in the multireplicon pangenomic structure of Rhizobium etli.</title>
        <authorList>
            <person name="Gonzalez V."/>
            <person name="Acosta J.L."/>
            <person name="Santamaria R.I."/>
            <person name="Bustos P."/>
            <person name="Fernandez J.L."/>
            <person name="Hernandez Gonzalez I.L."/>
            <person name="Diaz R."/>
            <person name="Flores M."/>
            <person name="Palacios R."/>
            <person name="Mora J."/>
            <person name="Davila G."/>
        </authorList>
    </citation>
    <scope>NUCLEOTIDE SEQUENCE [LARGE SCALE GENOMIC DNA]</scope>
    <source>
        <strain>CIAT 652</strain>
    </source>
</reference>
<dbReference type="EMBL" id="CP001074">
    <property type="protein sequence ID" value="ACE90486.1"/>
    <property type="molecule type" value="Genomic_DNA"/>
</dbReference>
<dbReference type="SMR" id="B3PUT7"/>
<dbReference type="KEGG" id="rec:RHECIAT_CH0001508"/>
<dbReference type="eggNOG" id="COG0360">
    <property type="taxonomic scope" value="Bacteria"/>
</dbReference>
<dbReference type="HOGENOM" id="CLU_113441_2_0_5"/>
<dbReference type="Proteomes" id="UP000008817">
    <property type="component" value="Chromosome"/>
</dbReference>
<dbReference type="GO" id="GO:0022627">
    <property type="term" value="C:cytosolic small ribosomal subunit"/>
    <property type="evidence" value="ECO:0007669"/>
    <property type="project" value="TreeGrafter"/>
</dbReference>
<dbReference type="GO" id="GO:0070181">
    <property type="term" value="F:small ribosomal subunit rRNA binding"/>
    <property type="evidence" value="ECO:0007669"/>
    <property type="project" value="TreeGrafter"/>
</dbReference>
<dbReference type="GO" id="GO:0003735">
    <property type="term" value="F:structural constituent of ribosome"/>
    <property type="evidence" value="ECO:0007669"/>
    <property type="project" value="InterPro"/>
</dbReference>
<dbReference type="GO" id="GO:0006412">
    <property type="term" value="P:translation"/>
    <property type="evidence" value="ECO:0007669"/>
    <property type="project" value="UniProtKB-UniRule"/>
</dbReference>
<dbReference type="CDD" id="cd00473">
    <property type="entry name" value="bS6"/>
    <property type="match status" value="1"/>
</dbReference>
<dbReference type="Gene3D" id="3.30.70.60">
    <property type="match status" value="1"/>
</dbReference>
<dbReference type="HAMAP" id="MF_00360">
    <property type="entry name" value="Ribosomal_bS6"/>
    <property type="match status" value="1"/>
</dbReference>
<dbReference type="InterPro" id="IPR000529">
    <property type="entry name" value="Ribosomal_bS6"/>
</dbReference>
<dbReference type="InterPro" id="IPR035980">
    <property type="entry name" value="Ribosomal_bS6_sf"/>
</dbReference>
<dbReference type="InterPro" id="IPR020814">
    <property type="entry name" value="Ribosomal_S6_plastid/chlpt"/>
</dbReference>
<dbReference type="InterPro" id="IPR014717">
    <property type="entry name" value="Transl_elong_EF1B/ribsomal_bS6"/>
</dbReference>
<dbReference type="NCBIfam" id="TIGR00166">
    <property type="entry name" value="S6"/>
    <property type="match status" value="1"/>
</dbReference>
<dbReference type="PANTHER" id="PTHR21011">
    <property type="entry name" value="MITOCHONDRIAL 28S RIBOSOMAL PROTEIN S6"/>
    <property type="match status" value="1"/>
</dbReference>
<dbReference type="PANTHER" id="PTHR21011:SF1">
    <property type="entry name" value="SMALL RIBOSOMAL SUBUNIT PROTEIN BS6M"/>
    <property type="match status" value="1"/>
</dbReference>
<dbReference type="Pfam" id="PF01250">
    <property type="entry name" value="Ribosomal_S6"/>
    <property type="match status" value="1"/>
</dbReference>
<dbReference type="SUPFAM" id="SSF54995">
    <property type="entry name" value="Ribosomal protein S6"/>
    <property type="match status" value="1"/>
</dbReference>
<feature type="chain" id="PRO_1000120792" description="Small ribosomal subunit protein bS6">
    <location>
        <begin position="1"/>
        <end position="152"/>
    </location>
</feature>
<feature type="region of interest" description="Disordered" evidence="2">
    <location>
        <begin position="96"/>
        <end position="152"/>
    </location>
</feature>
<accession>B3PUT7</accession>
<sequence>MALYEHVFLARQDISAQQVDALVEQYKGVIEANGGKVGRIENWGLKSLTYRIKKNRKAHYALMDIDAPAAAIQEMERQMRISEDVLRYMTIAVEKHEEGPSAMLQKRDRDDRGPREGGDRGPRREFGDRPPRRDGDFQRGPRPDRAPREDRA</sequence>
<evidence type="ECO:0000255" key="1">
    <source>
        <dbReference type="HAMAP-Rule" id="MF_00360"/>
    </source>
</evidence>
<evidence type="ECO:0000256" key="2">
    <source>
        <dbReference type="SAM" id="MobiDB-lite"/>
    </source>
</evidence>
<evidence type="ECO:0000305" key="3"/>
<keyword id="KW-0687">Ribonucleoprotein</keyword>
<keyword id="KW-0689">Ribosomal protein</keyword>
<keyword id="KW-0694">RNA-binding</keyword>
<keyword id="KW-0699">rRNA-binding</keyword>
<organism>
    <name type="scientific">Rhizobium etli (strain CIAT 652)</name>
    <dbReference type="NCBI Taxonomy" id="491916"/>
    <lineage>
        <taxon>Bacteria</taxon>
        <taxon>Pseudomonadati</taxon>
        <taxon>Pseudomonadota</taxon>
        <taxon>Alphaproteobacteria</taxon>
        <taxon>Hyphomicrobiales</taxon>
        <taxon>Rhizobiaceae</taxon>
        <taxon>Rhizobium/Agrobacterium group</taxon>
        <taxon>Rhizobium</taxon>
    </lineage>
</organism>
<name>RS6_RHIE6</name>
<protein>
    <recommendedName>
        <fullName evidence="1">Small ribosomal subunit protein bS6</fullName>
    </recommendedName>
    <alternativeName>
        <fullName evidence="3">30S ribosomal protein S6</fullName>
    </alternativeName>
</protein>
<comment type="function">
    <text evidence="1">Binds together with bS18 to 16S ribosomal RNA.</text>
</comment>
<comment type="similarity">
    <text evidence="1">Belongs to the bacterial ribosomal protein bS6 family.</text>
</comment>